<sequence length="540" mass="60363">MAVKYIFVTGGVLSSLGKGITSSSIATLLQQSGYSVSILKIDPYINVDPGTMSPLEHGEVFVTCDGAETDLDIGHYERFLNKDFHKKNNFTTGQIYMSVIENERKGKYLGKTIQIVPHIVDEIKSRIKFAGEGSDFLVVELGGTVGDIEGMPYLEAMRQMKHELGGKQVISIHITLIPLMRAAGELKTKPTQHSVQELRRIGISPQILVARCEKNLDKELKRKLALSCDVDNDSVIVAQDTQSIYKCPLNFLEEGILTPIARHLELGELKPKMDNWDMLVKKIIAPKSNITIGFVGKYLSLKESYKSLIESLIHAGANTDTRVNIKWIDSEILVDNLALLYDVDSLLIPGGFGERGIEGKLEAIKYARIQQIPLLGICLGMQLSLIEFARNVLGMSEANSIEFDPQTKEPVIYLIENFIDSQGGVQLRTHTSPMGGTMRLGEYECHIKKGTKLYEAYGKQTLIKERHRHRYEANPHYRALFEKNGMIVSGESNGLIESIELANHPWFVGVQFHPEFTSRLQNPNPVILAFVKETLAHKKT</sequence>
<name>PYRG_HELHP</name>
<comment type="function">
    <text evidence="1">Catalyzes the ATP-dependent amination of UTP to CTP with either L-glutamine or ammonia as the source of nitrogen. Regulates intracellular CTP levels through interactions with the four ribonucleotide triphosphates.</text>
</comment>
<comment type="catalytic activity">
    <reaction evidence="1">
        <text>UTP + L-glutamine + ATP + H2O = CTP + L-glutamate + ADP + phosphate + 2 H(+)</text>
        <dbReference type="Rhea" id="RHEA:26426"/>
        <dbReference type="ChEBI" id="CHEBI:15377"/>
        <dbReference type="ChEBI" id="CHEBI:15378"/>
        <dbReference type="ChEBI" id="CHEBI:29985"/>
        <dbReference type="ChEBI" id="CHEBI:30616"/>
        <dbReference type="ChEBI" id="CHEBI:37563"/>
        <dbReference type="ChEBI" id="CHEBI:43474"/>
        <dbReference type="ChEBI" id="CHEBI:46398"/>
        <dbReference type="ChEBI" id="CHEBI:58359"/>
        <dbReference type="ChEBI" id="CHEBI:456216"/>
        <dbReference type="EC" id="6.3.4.2"/>
    </reaction>
</comment>
<comment type="catalytic activity">
    <reaction evidence="1">
        <text>L-glutamine + H2O = L-glutamate + NH4(+)</text>
        <dbReference type="Rhea" id="RHEA:15889"/>
        <dbReference type="ChEBI" id="CHEBI:15377"/>
        <dbReference type="ChEBI" id="CHEBI:28938"/>
        <dbReference type="ChEBI" id="CHEBI:29985"/>
        <dbReference type="ChEBI" id="CHEBI:58359"/>
    </reaction>
</comment>
<comment type="catalytic activity">
    <reaction evidence="1">
        <text>UTP + NH4(+) + ATP = CTP + ADP + phosphate + 2 H(+)</text>
        <dbReference type="Rhea" id="RHEA:16597"/>
        <dbReference type="ChEBI" id="CHEBI:15378"/>
        <dbReference type="ChEBI" id="CHEBI:28938"/>
        <dbReference type="ChEBI" id="CHEBI:30616"/>
        <dbReference type="ChEBI" id="CHEBI:37563"/>
        <dbReference type="ChEBI" id="CHEBI:43474"/>
        <dbReference type="ChEBI" id="CHEBI:46398"/>
        <dbReference type="ChEBI" id="CHEBI:456216"/>
    </reaction>
</comment>
<comment type="activity regulation">
    <text evidence="1">Allosterically activated by GTP, when glutamine is the substrate; GTP has no effect on the reaction when ammonia is the substrate. The allosteric effector GTP functions by stabilizing the protein conformation that binds the tetrahedral intermediate(s) formed during glutamine hydrolysis. Inhibited by the product CTP, via allosteric rather than competitive inhibition.</text>
</comment>
<comment type="pathway">
    <text evidence="1">Pyrimidine metabolism; CTP biosynthesis via de novo pathway; CTP from UDP: step 2/2.</text>
</comment>
<comment type="subunit">
    <text evidence="1">Homotetramer.</text>
</comment>
<comment type="miscellaneous">
    <text evidence="1">CTPSs have evolved a hybrid strategy for distinguishing between UTP and CTP. The overlapping regions of the product feedback inhibitory and substrate sites recognize a common feature in both compounds, the triphosphate moiety. To differentiate isosteric substrate and product pyrimidine rings, an additional pocket far from the expected kinase/ligase catalytic site, specifically recognizes the cytosine and ribose portions of the product inhibitor.</text>
</comment>
<comment type="similarity">
    <text evidence="1">Belongs to the CTP synthase family.</text>
</comment>
<dbReference type="EC" id="6.3.4.2" evidence="1"/>
<dbReference type="EMBL" id="AE017125">
    <property type="protein sequence ID" value="AAP77947.1"/>
    <property type="molecule type" value="Genomic_DNA"/>
</dbReference>
<dbReference type="RefSeq" id="WP_011116190.1">
    <property type="nucleotide sequence ID" value="NC_004917.1"/>
</dbReference>
<dbReference type="SMR" id="Q7VGH1"/>
<dbReference type="STRING" id="235279.HH_1350"/>
<dbReference type="KEGG" id="hhe:HH_1350"/>
<dbReference type="eggNOG" id="COG0504">
    <property type="taxonomic scope" value="Bacteria"/>
</dbReference>
<dbReference type="HOGENOM" id="CLU_011675_5_0_7"/>
<dbReference type="OrthoDB" id="9801107at2"/>
<dbReference type="UniPathway" id="UPA00159">
    <property type="reaction ID" value="UER00277"/>
</dbReference>
<dbReference type="Proteomes" id="UP000002495">
    <property type="component" value="Chromosome"/>
</dbReference>
<dbReference type="GO" id="GO:0005829">
    <property type="term" value="C:cytosol"/>
    <property type="evidence" value="ECO:0007669"/>
    <property type="project" value="TreeGrafter"/>
</dbReference>
<dbReference type="GO" id="GO:0005524">
    <property type="term" value="F:ATP binding"/>
    <property type="evidence" value="ECO:0007669"/>
    <property type="project" value="UniProtKB-KW"/>
</dbReference>
<dbReference type="GO" id="GO:0003883">
    <property type="term" value="F:CTP synthase activity"/>
    <property type="evidence" value="ECO:0007669"/>
    <property type="project" value="UniProtKB-UniRule"/>
</dbReference>
<dbReference type="GO" id="GO:0004359">
    <property type="term" value="F:glutaminase activity"/>
    <property type="evidence" value="ECO:0007669"/>
    <property type="project" value="RHEA"/>
</dbReference>
<dbReference type="GO" id="GO:0042802">
    <property type="term" value="F:identical protein binding"/>
    <property type="evidence" value="ECO:0007669"/>
    <property type="project" value="TreeGrafter"/>
</dbReference>
<dbReference type="GO" id="GO:0046872">
    <property type="term" value="F:metal ion binding"/>
    <property type="evidence" value="ECO:0007669"/>
    <property type="project" value="UniProtKB-KW"/>
</dbReference>
<dbReference type="GO" id="GO:0044210">
    <property type="term" value="P:'de novo' CTP biosynthetic process"/>
    <property type="evidence" value="ECO:0007669"/>
    <property type="project" value="UniProtKB-UniRule"/>
</dbReference>
<dbReference type="GO" id="GO:0019856">
    <property type="term" value="P:pyrimidine nucleobase biosynthetic process"/>
    <property type="evidence" value="ECO:0007669"/>
    <property type="project" value="TreeGrafter"/>
</dbReference>
<dbReference type="CDD" id="cd03113">
    <property type="entry name" value="CTPS_N"/>
    <property type="match status" value="1"/>
</dbReference>
<dbReference type="CDD" id="cd01746">
    <property type="entry name" value="GATase1_CTP_Synthase"/>
    <property type="match status" value="1"/>
</dbReference>
<dbReference type="FunFam" id="3.40.50.300:FF:000009">
    <property type="entry name" value="CTP synthase"/>
    <property type="match status" value="1"/>
</dbReference>
<dbReference type="FunFam" id="3.40.50.880:FF:000002">
    <property type="entry name" value="CTP synthase"/>
    <property type="match status" value="1"/>
</dbReference>
<dbReference type="Gene3D" id="3.40.50.880">
    <property type="match status" value="1"/>
</dbReference>
<dbReference type="Gene3D" id="3.40.50.300">
    <property type="entry name" value="P-loop containing nucleotide triphosphate hydrolases"/>
    <property type="match status" value="1"/>
</dbReference>
<dbReference type="HAMAP" id="MF_01227">
    <property type="entry name" value="PyrG"/>
    <property type="match status" value="1"/>
</dbReference>
<dbReference type="InterPro" id="IPR029062">
    <property type="entry name" value="Class_I_gatase-like"/>
</dbReference>
<dbReference type="InterPro" id="IPR004468">
    <property type="entry name" value="CTP_synthase"/>
</dbReference>
<dbReference type="InterPro" id="IPR017456">
    <property type="entry name" value="CTP_synthase_N"/>
</dbReference>
<dbReference type="InterPro" id="IPR017926">
    <property type="entry name" value="GATASE"/>
</dbReference>
<dbReference type="InterPro" id="IPR033828">
    <property type="entry name" value="GATase1_CTP_Synthase"/>
</dbReference>
<dbReference type="InterPro" id="IPR027417">
    <property type="entry name" value="P-loop_NTPase"/>
</dbReference>
<dbReference type="NCBIfam" id="NF003792">
    <property type="entry name" value="PRK05380.1"/>
    <property type="match status" value="1"/>
</dbReference>
<dbReference type="NCBIfam" id="TIGR00337">
    <property type="entry name" value="PyrG"/>
    <property type="match status" value="1"/>
</dbReference>
<dbReference type="PANTHER" id="PTHR11550">
    <property type="entry name" value="CTP SYNTHASE"/>
    <property type="match status" value="1"/>
</dbReference>
<dbReference type="PANTHER" id="PTHR11550:SF0">
    <property type="entry name" value="CTP SYNTHASE-RELATED"/>
    <property type="match status" value="1"/>
</dbReference>
<dbReference type="Pfam" id="PF06418">
    <property type="entry name" value="CTP_synth_N"/>
    <property type="match status" value="1"/>
</dbReference>
<dbReference type="Pfam" id="PF00117">
    <property type="entry name" value="GATase"/>
    <property type="match status" value="1"/>
</dbReference>
<dbReference type="SUPFAM" id="SSF52317">
    <property type="entry name" value="Class I glutamine amidotransferase-like"/>
    <property type="match status" value="1"/>
</dbReference>
<dbReference type="SUPFAM" id="SSF52540">
    <property type="entry name" value="P-loop containing nucleoside triphosphate hydrolases"/>
    <property type="match status" value="1"/>
</dbReference>
<dbReference type="PROSITE" id="PS51273">
    <property type="entry name" value="GATASE_TYPE_1"/>
    <property type="match status" value="1"/>
</dbReference>
<proteinExistence type="inferred from homology"/>
<organism>
    <name type="scientific">Helicobacter hepaticus (strain ATCC 51449 / 3B1)</name>
    <dbReference type="NCBI Taxonomy" id="235279"/>
    <lineage>
        <taxon>Bacteria</taxon>
        <taxon>Pseudomonadati</taxon>
        <taxon>Campylobacterota</taxon>
        <taxon>Epsilonproteobacteria</taxon>
        <taxon>Campylobacterales</taxon>
        <taxon>Helicobacteraceae</taxon>
        <taxon>Helicobacter</taxon>
    </lineage>
</organism>
<gene>
    <name evidence="1" type="primary">pyrG</name>
    <name type="ordered locus">HH_1350</name>
</gene>
<evidence type="ECO:0000255" key="1">
    <source>
        <dbReference type="HAMAP-Rule" id="MF_01227"/>
    </source>
</evidence>
<protein>
    <recommendedName>
        <fullName evidence="1">CTP synthase</fullName>
        <ecNumber evidence="1">6.3.4.2</ecNumber>
    </recommendedName>
    <alternativeName>
        <fullName evidence="1">Cytidine 5'-triphosphate synthase</fullName>
    </alternativeName>
    <alternativeName>
        <fullName evidence="1">Cytidine triphosphate synthetase</fullName>
        <shortName evidence="1">CTP synthetase</shortName>
        <shortName evidence="1">CTPS</shortName>
    </alternativeName>
    <alternativeName>
        <fullName evidence="1">UTP--ammonia ligase</fullName>
    </alternativeName>
</protein>
<feature type="chain" id="PRO_0000266133" description="CTP synthase">
    <location>
        <begin position="1"/>
        <end position="540"/>
    </location>
</feature>
<feature type="domain" description="Glutamine amidotransferase type-1" evidence="1">
    <location>
        <begin position="291"/>
        <end position="540"/>
    </location>
</feature>
<feature type="region of interest" description="Amidoligase domain" evidence="1">
    <location>
        <begin position="1"/>
        <end position="266"/>
    </location>
</feature>
<feature type="active site" description="Nucleophile; for glutamine hydrolysis" evidence="1">
    <location>
        <position position="378"/>
    </location>
</feature>
<feature type="active site" evidence="1">
    <location>
        <position position="513"/>
    </location>
</feature>
<feature type="active site" evidence="1">
    <location>
        <position position="515"/>
    </location>
</feature>
<feature type="binding site" evidence="1">
    <location>
        <position position="14"/>
    </location>
    <ligand>
        <name>CTP</name>
        <dbReference type="ChEBI" id="CHEBI:37563"/>
        <note>allosteric inhibitor</note>
    </ligand>
</feature>
<feature type="binding site" evidence="1">
    <location>
        <position position="14"/>
    </location>
    <ligand>
        <name>UTP</name>
        <dbReference type="ChEBI" id="CHEBI:46398"/>
    </ligand>
</feature>
<feature type="binding site" evidence="1">
    <location>
        <begin position="15"/>
        <end position="20"/>
    </location>
    <ligand>
        <name>ATP</name>
        <dbReference type="ChEBI" id="CHEBI:30616"/>
    </ligand>
</feature>
<feature type="binding site" evidence="1">
    <location>
        <position position="72"/>
    </location>
    <ligand>
        <name>ATP</name>
        <dbReference type="ChEBI" id="CHEBI:30616"/>
    </ligand>
</feature>
<feature type="binding site" evidence="1">
    <location>
        <position position="72"/>
    </location>
    <ligand>
        <name>Mg(2+)</name>
        <dbReference type="ChEBI" id="CHEBI:18420"/>
    </ligand>
</feature>
<feature type="binding site" evidence="1">
    <location>
        <position position="140"/>
    </location>
    <ligand>
        <name>Mg(2+)</name>
        <dbReference type="ChEBI" id="CHEBI:18420"/>
    </ligand>
</feature>
<feature type="binding site" evidence="1">
    <location>
        <begin position="147"/>
        <end position="149"/>
    </location>
    <ligand>
        <name>CTP</name>
        <dbReference type="ChEBI" id="CHEBI:37563"/>
        <note>allosteric inhibitor</note>
    </ligand>
</feature>
<feature type="binding site" evidence="1">
    <location>
        <begin position="187"/>
        <end position="192"/>
    </location>
    <ligand>
        <name>CTP</name>
        <dbReference type="ChEBI" id="CHEBI:37563"/>
        <note>allosteric inhibitor</note>
    </ligand>
</feature>
<feature type="binding site" evidence="1">
    <location>
        <begin position="187"/>
        <end position="192"/>
    </location>
    <ligand>
        <name>UTP</name>
        <dbReference type="ChEBI" id="CHEBI:46398"/>
    </ligand>
</feature>
<feature type="binding site" evidence="1">
    <location>
        <position position="223"/>
    </location>
    <ligand>
        <name>CTP</name>
        <dbReference type="ChEBI" id="CHEBI:37563"/>
        <note>allosteric inhibitor</note>
    </ligand>
</feature>
<feature type="binding site" evidence="1">
    <location>
        <position position="223"/>
    </location>
    <ligand>
        <name>UTP</name>
        <dbReference type="ChEBI" id="CHEBI:46398"/>
    </ligand>
</feature>
<feature type="binding site" evidence="1">
    <location>
        <position position="351"/>
    </location>
    <ligand>
        <name>L-glutamine</name>
        <dbReference type="ChEBI" id="CHEBI:58359"/>
    </ligand>
</feature>
<feature type="binding site" evidence="1">
    <location>
        <begin position="379"/>
        <end position="382"/>
    </location>
    <ligand>
        <name>L-glutamine</name>
        <dbReference type="ChEBI" id="CHEBI:58359"/>
    </ligand>
</feature>
<feature type="binding site" evidence="1">
    <location>
        <position position="402"/>
    </location>
    <ligand>
        <name>L-glutamine</name>
        <dbReference type="ChEBI" id="CHEBI:58359"/>
    </ligand>
</feature>
<feature type="binding site" evidence="1">
    <location>
        <position position="470"/>
    </location>
    <ligand>
        <name>L-glutamine</name>
        <dbReference type="ChEBI" id="CHEBI:58359"/>
    </ligand>
</feature>
<keyword id="KW-0067">ATP-binding</keyword>
<keyword id="KW-0315">Glutamine amidotransferase</keyword>
<keyword id="KW-0436">Ligase</keyword>
<keyword id="KW-0460">Magnesium</keyword>
<keyword id="KW-0479">Metal-binding</keyword>
<keyword id="KW-0547">Nucleotide-binding</keyword>
<keyword id="KW-0665">Pyrimidine biosynthesis</keyword>
<keyword id="KW-1185">Reference proteome</keyword>
<accession>Q7VGH1</accession>
<reference key="1">
    <citation type="journal article" date="2003" name="Proc. Natl. Acad. Sci. U.S.A.">
        <title>The complete genome sequence of the carcinogenic bacterium Helicobacter hepaticus.</title>
        <authorList>
            <person name="Suerbaum S."/>
            <person name="Josenhans C."/>
            <person name="Sterzenbach T."/>
            <person name="Drescher B."/>
            <person name="Brandt P."/>
            <person name="Bell M."/>
            <person name="Droege M."/>
            <person name="Fartmann B."/>
            <person name="Fischer H.-P."/>
            <person name="Ge Z."/>
            <person name="Hoerster A."/>
            <person name="Holland R."/>
            <person name="Klein K."/>
            <person name="Koenig J."/>
            <person name="Macko L."/>
            <person name="Mendz G.L."/>
            <person name="Nyakatura G."/>
            <person name="Schauer D.B."/>
            <person name="Shen Z."/>
            <person name="Weber J."/>
            <person name="Frosch M."/>
            <person name="Fox J.G."/>
        </authorList>
    </citation>
    <scope>NUCLEOTIDE SEQUENCE [LARGE SCALE GENOMIC DNA]</scope>
    <source>
        <strain>ATCC 51449 / 3B1</strain>
    </source>
</reference>